<organism>
    <name type="scientific">Schizosaccharomyces pombe (strain 972 / ATCC 24843)</name>
    <name type="common">Fission yeast</name>
    <dbReference type="NCBI Taxonomy" id="284812"/>
    <lineage>
        <taxon>Eukaryota</taxon>
        <taxon>Fungi</taxon>
        <taxon>Dikarya</taxon>
        <taxon>Ascomycota</taxon>
        <taxon>Taphrinomycotina</taxon>
        <taxon>Schizosaccharomycetes</taxon>
        <taxon>Schizosaccharomycetales</taxon>
        <taxon>Schizosaccharomycetaceae</taxon>
        <taxon>Schizosaccharomyces</taxon>
    </lineage>
</organism>
<feature type="chain" id="PRO_0000096378" description="Mediator of RNA polymerase II transcription subunit 22">
    <location>
        <begin position="1"/>
        <end position="136"/>
    </location>
</feature>
<feature type="helix" evidence="4">
    <location>
        <begin position="6"/>
        <end position="38"/>
    </location>
</feature>
<feature type="helix" evidence="4">
    <location>
        <begin position="46"/>
        <end position="83"/>
    </location>
</feature>
<feature type="helix" evidence="4">
    <location>
        <begin position="100"/>
        <end position="111"/>
    </location>
</feature>
<feature type="turn" evidence="4">
    <location>
        <begin position="112"/>
        <end position="114"/>
    </location>
</feature>
<reference key="1">
    <citation type="journal article" date="2002" name="Nature">
        <title>The genome sequence of Schizosaccharomyces pombe.</title>
        <authorList>
            <person name="Wood V."/>
            <person name="Gwilliam R."/>
            <person name="Rajandream M.A."/>
            <person name="Lyne M.H."/>
            <person name="Lyne R."/>
            <person name="Stewart A."/>
            <person name="Sgouros J.G."/>
            <person name="Peat N."/>
            <person name="Hayles J."/>
            <person name="Baker S.G."/>
            <person name="Basham D."/>
            <person name="Bowman S."/>
            <person name="Brooks K."/>
            <person name="Brown D."/>
            <person name="Brown S."/>
            <person name="Chillingworth T."/>
            <person name="Churcher C.M."/>
            <person name="Collins M."/>
            <person name="Connor R."/>
            <person name="Cronin A."/>
            <person name="Davis P."/>
            <person name="Feltwell T."/>
            <person name="Fraser A."/>
            <person name="Gentles S."/>
            <person name="Goble A."/>
            <person name="Hamlin N."/>
            <person name="Harris D.E."/>
            <person name="Hidalgo J."/>
            <person name="Hodgson G."/>
            <person name="Holroyd S."/>
            <person name="Hornsby T."/>
            <person name="Howarth S."/>
            <person name="Huckle E.J."/>
            <person name="Hunt S."/>
            <person name="Jagels K."/>
            <person name="James K.D."/>
            <person name="Jones L."/>
            <person name="Jones M."/>
            <person name="Leather S."/>
            <person name="McDonald S."/>
            <person name="McLean J."/>
            <person name="Mooney P."/>
            <person name="Moule S."/>
            <person name="Mungall K.L."/>
            <person name="Murphy L.D."/>
            <person name="Niblett D."/>
            <person name="Odell C."/>
            <person name="Oliver K."/>
            <person name="O'Neil S."/>
            <person name="Pearson D."/>
            <person name="Quail M.A."/>
            <person name="Rabbinowitsch E."/>
            <person name="Rutherford K.M."/>
            <person name="Rutter S."/>
            <person name="Saunders D."/>
            <person name="Seeger K."/>
            <person name="Sharp S."/>
            <person name="Skelton J."/>
            <person name="Simmonds M.N."/>
            <person name="Squares R."/>
            <person name="Squares S."/>
            <person name="Stevens K."/>
            <person name="Taylor K."/>
            <person name="Taylor R.G."/>
            <person name="Tivey A."/>
            <person name="Walsh S.V."/>
            <person name="Warren T."/>
            <person name="Whitehead S."/>
            <person name="Woodward J.R."/>
            <person name="Volckaert G."/>
            <person name="Aert R."/>
            <person name="Robben J."/>
            <person name="Grymonprez B."/>
            <person name="Weltjens I."/>
            <person name="Vanstreels E."/>
            <person name="Rieger M."/>
            <person name="Schaefer M."/>
            <person name="Mueller-Auer S."/>
            <person name="Gabel C."/>
            <person name="Fuchs M."/>
            <person name="Duesterhoeft A."/>
            <person name="Fritzc C."/>
            <person name="Holzer E."/>
            <person name="Moestl D."/>
            <person name="Hilbert H."/>
            <person name="Borzym K."/>
            <person name="Langer I."/>
            <person name="Beck A."/>
            <person name="Lehrach H."/>
            <person name="Reinhardt R."/>
            <person name="Pohl T.M."/>
            <person name="Eger P."/>
            <person name="Zimmermann W."/>
            <person name="Wedler H."/>
            <person name="Wambutt R."/>
            <person name="Purnelle B."/>
            <person name="Goffeau A."/>
            <person name="Cadieu E."/>
            <person name="Dreano S."/>
            <person name="Gloux S."/>
            <person name="Lelaure V."/>
            <person name="Mottier S."/>
            <person name="Galibert F."/>
            <person name="Aves S.J."/>
            <person name="Xiang Z."/>
            <person name="Hunt C."/>
            <person name="Moore K."/>
            <person name="Hurst S.M."/>
            <person name="Lucas M."/>
            <person name="Rochet M."/>
            <person name="Gaillardin C."/>
            <person name="Tallada V.A."/>
            <person name="Garzon A."/>
            <person name="Thode G."/>
            <person name="Daga R.R."/>
            <person name="Cruzado L."/>
            <person name="Jimenez J."/>
            <person name="Sanchez M."/>
            <person name="del Rey F."/>
            <person name="Benito J."/>
            <person name="Dominguez A."/>
            <person name="Revuelta J.L."/>
            <person name="Moreno S."/>
            <person name="Armstrong J."/>
            <person name="Forsburg S.L."/>
            <person name="Cerutti L."/>
            <person name="Lowe T."/>
            <person name="McCombie W.R."/>
            <person name="Paulsen I."/>
            <person name="Potashkin J."/>
            <person name="Shpakovski G.V."/>
            <person name="Ussery D."/>
            <person name="Barrell B.G."/>
            <person name="Nurse P."/>
        </authorList>
    </citation>
    <scope>NUCLEOTIDE SEQUENCE [LARGE SCALE GENOMIC DNA]</scope>
    <source>
        <strain>972 / ATCC 24843</strain>
    </source>
</reference>
<reference key="2">
    <citation type="journal article" date="2001" name="Proc. Natl. Acad. Sci. U.S.A.">
        <title>Analysis of Schizosaccharomyces pombe mediator reveals a set of essential subunits conserved between yeast and metazoan cells.</title>
        <authorList>
            <person name="Spaehr H."/>
            <person name="Samuelsen C.O."/>
            <person name="Baraznenok V."/>
            <person name="Ernest I."/>
            <person name="Huylebroeck D."/>
            <person name="Remacle J.E."/>
            <person name="Samuelsson T."/>
            <person name="Kieselbach T."/>
            <person name="Holmberg S."/>
            <person name="Gustafsson C.M."/>
        </authorList>
    </citation>
    <scope>IDENTIFICATION BY MASS SPECTROMETRY</scope>
    <scope>IDENTIFICATION IN THE MEDIATOR COMPLEX</scope>
</reference>
<evidence type="ECO:0000250" key="1"/>
<evidence type="ECO:0000269" key="2">
    <source>
    </source>
</evidence>
<evidence type="ECO:0000305" key="3"/>
<evidence type="ECO:0007829" key="4">
    <source>
        <dbReference type="PDB" id="4H63"/>
    </source>
</evidence>
<accession>O14010</accession>
<comment type="function">
    <text>Component of the Mediator complex, a coactivator involved in the regulated transcription of nearly all RNA polymerase II-dependent genes. Mediator functions as a bridge to convey information from gene-specific regulatory proteins to the basal RNA polymerase II transcription machinery. Mediator is recruited to promoters by direct interactions with regulatory proteins and serves as a scaffold for the assembly of a functional preinitiation complex with RNA polymerase II and the general transcription factors.</text>
</comment>
<comment type="subunit">
    <text evidence="2">Component of the Mediator complex.</text>
</comment>
<comment type="subcellular location">
    <subcellularLocation>
        <location evidence="1">Nucleus</location>
    </subcellularLocation>
</comment>
<comment type="similarity">
    <text evidence="3">Belongs to the Mediator complex subunit 22 family.</text>
</comment>
<name>MED22_SCHPO</name>
<sequence>MSSDSFQRQLVQRTNTLNSSIDNATLTILSRFQDILDIAINEGKDKYTVAPEVYQIECHTVSMVRAVEQLLDVSRQIKSYWLTNSLSTSFPTVDYSEPDLEKVKRTLTKLQNHLLEVSLIEPEASETTEAPTVSDT</sequence>
<gene>
    <name type="primary">med22</name>
    <name type="synonym">srb6</name>
    <name type="ORF">SPAC29A4.07</name>
</gene>
<keyword id="KW-0002">3D-structure</keyword>
<keyword id="KW-0010">Activator</keyword>
<keyword id="KW-0539">Nucleus</keyword>
<keyword id="KW-1185">Reference proteome</keyword>
<keyword id="KW-0804">Transcription</keyword>
<keyword id="KW-0805">Transcription regulation</keyword>
<protein>
    <recommendedName>
        <fullName>Mediator of RNA polymerase II transcription subunit 22</fullName>
    </recommendedName>
    <alternativeName>
        <fullName>Mediator complex subunit 22</fullName>
    </alternativeName>
    <alternativeName>
        <fullName>Suppressor of RNA polymerase B 6 homolog</fullName>
    </alternativeName>
</protein>
<dbReference type="EMBL" id="CU329670">
    <property type="protein sequence ID" value="CAB10134.1"/>
    <property type="molecule type" value="Genomic_DNA"/>
</dbReference>
<dbReference type="PIR" id="T38482">
    <property type="entry name" value="T38482"/>
</dbReference>
<dbReference type="RefSeq" id="NP_594875.1">
    <property type="nucleotide sequence ID" value="NM_001020304.2"/>
</dbReference>
<dbReference type="PDB" id="4H63">
    <property type="method" value="X-ray"/>
    <property type="resolution" value="3.40 A"/>
    <property type="chains" value="V=2-136"/>
</dbReference>
<dbReference type="PDB" id="5N9J">
    <property type="method" value="X-ray"/>
    <property type="resolution" value="3.40 A"/>
    <property type="chains" value="Z=1-136"/>
</dbReference>
<dbReference type="PDB" id="5U0P">
    <property type="method" value="EM"/>
    <property type="resolution" value="4.40 A"/>
    <property type="chains" value="V=1-136"/>
</dbReference>
<dbReference type="PDB" id="5U0S">
    <property type="method" value="EM"/>
    <property type="resolution" value="7.80 A"/>
    <property type="chains" value="V=1-136"/>
</dbReference>
<dbReference type="PDBsum" id="4H63"/>
<dbReference type="PDBsum" id="5N9J"/>
<dbReference type="PDBsum" id="5U0P"/>
<dbReference type="PDBsum" id="5U0S"/>
<dbReference type="EMDB" id="EMD-8479"/>
<dbReference type="EMDB" id="EMD-8480"/>
<dbReference type="SMR" id="O14010"/>
<dbReference type="BioGRID" id="278877">
    <property type="interactions" value="3"/>
</dbReference>
<dbReference type="DIP" id="DIP-38756N"/>
<dbReference type="FunCoup" id="O14010">
    <property type="interactions" value="34"/>
</dbReference>
<dbReference type="IntAct" id="O14010">
    <property type="interactions" value="3"/>
</dbReference>
<dbReference type="STRING" id="284812.O14010"/>
<dbReference type="PaxDb" id="4896-SPAC29A4.07.1"/>
<dbReference type="EnsemblFungi" id="SPAC29A4.07.1">
    <property type="protein sequence ID" value="SPAC29A4.07.1:pep"/>
    <property type="gene ID" value="SPAC29A4.07"/>
</dbReference>
<dbReference type="GeneID" id="2542413"/>
<dbReference type="KEGG" id="spo:2542413"/>
<dbReference type="PomBase" id="SPAC29A4.07"/>
<dbReference type="VEuPathDB" id="FungiDB:SPAC29A4.07"/>
<dbReference type="eggNOG" id="ENOG502SD63">
    <property type="taxonomic scope" value="Eukaryota"/>
</dbReference>
<dbReference type="HOGENOM" id="CLU_1866296_0_0_1"/>
<dbReference type="InParanoid" id="O14010"/>
<dbReference type="OMA" id="YQIECHT"/>
<dbReference type="EvolutionaryTrace" id="O14010"/>
<dbReference type="PRO" id="PR:O14010"/>
<dbReference type="Proteomes" id="UP000002485">
    <property type="component" value="Chromosome I"/>
</dbReference>
<dbReference type="GO" id="GO:0016592">
    <property type="term" value="C:mediator complex"/>
    <property type="evidence" value="ECO:0000314"/>
    <property type="project" value="PomBase"/>
</dbReference>
<dbReference type="GO" id="GO:0005634">
    <property type="term" value="C:nucleus"/>
    <property type="evidence" value="ECO:0007005"/>
    <property type="project" value="PomBase"/>
</dbReference>
<dbReference type="GO" id="GO:0003713">
    <property type="term" value="F:transcription coactivator activity"/>
    <property type="evidence" value="ECO:0000314"/>
    <property type="project" value="PomBase"/>
</dbReference>
<dbReference type="GO" id="GO:0060261">
    <property type="term" value="P:positive regulation of transcription initiation by RNA polymerase II"/>
    <property type="evidence" value="ECO:0000269"/>
    <property type="project" value="PomBase"/>
</dbReference>
<dbReference type="GO" id="GO:0006367">
    <property type="term" value="P:transcription initiation at RNA polymerase II promoter"/>
    <property type="evidence" value="ECO:0000314"/>
    <property type="project" value="PomBase"/>
</dbReference>
<dbReference type="Gene3D" id="6.10.280.160">
    <property type="entry name" value="Mediator of RNA polymerase II transcription subunit 22"/>
    <property type="match status" value="1"/>
</dbReference>
<dbReference type="InterPro" id="IPR009332">
    <property type="entry name" value="Med22"/>
</dbReference>
<dbReference type="PANTHER" id="PTHR12434">
    <property type="entry name" value="MEDIATOR OF RNA POLYMERASE II TRANSCRIPTION SUBUNIT 22"/>
    <property type="match status" value="1"/>
</dbReference>
<dbReference type="PANTHER" id="PTHR12434:SF6">
    <property type="entry name" value="MEDIATOR OF RNA POLYMERASE II TRANSCRIPTION SUBUNIT 22"/>
    <property type="match status" value="1"/>
</dbReference>
<dbReference type="Pfam" id="PF06179">
    <property type="entry name" value="Med22"/>
    <property type="match status" value="1"/>
</dbReference>
<proteinExistence type="evidence at protein level"/>